<dbReference type="EMBL" id="CP000407">
    <property type="protein sequence ID" value="ABP90816.1"/>
    <property type="molecule type" value="Genomic_DNA"/>
</dbReference>
<dbReference type="SMR" id="A4VXH7"/>
<dbReference type="STRING" id="391295.SSU05_1850"/>
<dbReference type="KEGG" id="ssu:SSU05_1850"/>
<dbReference type="eggNOG" id="COG0779">
    <property type="taxonomic scope" value="Bacteria"/>
</dbReference>
<dbReference type="HOGENOM" id="CLU_070525_2_0_9"/>
<dbReference type="GO" id="GO:0005829">
    <property type="term" value="C:cytosol"/>
    <property type="evidence" value="ECO:0007669"/>
    <property type="project" value="TreeGrafter"/>
</dbReference>
<dbReference type="GO" id="GO:0000028">
    <property type="term" value="P:ribosomal small subunit assembly"/>
    <property type="evidence" value="ECO:0007669"/>
    <property type="project" value="TreeGrafter"/>
</dbReference>
<dbReference type="GO" id="GO:0006412">
    <property type="term" value="P:translation"/>
    <property type="evidence" value="ECO:0007669"/>
    <property type="project" value="TreeGrafter"/>
</dbReference>
<dbReference type="CDD" id="cd01734">
    <property type="entry name" value="YlxS_C"/>
    <property type="match status" value="1"/>
</dbReference>
<dbReference type="Gene3D" id="2.30.30.180">
    <property type="entry name" value="Ribosome maturation factor RimP, C-terminal domain"/>
    <property type="match status" value="1"/>
</dbReference>
<dbReference type="Gene3D" id="3.30.300.70">
    <property type="entry name" value="RimP-like superfamily, N-terminal"/>
    <property type="match status" value="1"/>
</dbReference>
<dbReference type="HAMAP" id="MF_01077">
    <property type="entry name" value="RimP"/>
    <property type="match status" value="1"/>
</dbReference>
<dbReference type="InterPro" id="IPR003728">
    <property type="entry name" value="Ribosome_maturation_RimP"/>
</dbReference>
<dbReference type="InterPro" id="IPR028998">
    <property type="entry name" value="RimP_C"/>
</dbReference>
<dbReference type="InterPro" id="IPR036847">
    <property type="entry name" value="RimP_C_sf"/>
</dbReference>
<dbReference type="InterPro" id="IPR028989">
    <property type="entry name" value="RimP_N"/>
</dbReference>
<dbReference type="InterPro" id="IPR035956">
    <property type="entry name" value="RimP_N_sf"/>
</dbReference>
<dbReference type="NCBIfam" id="NF000928">
    <property type="entry name" value="PRK00092.1-2"/>
    <property type="match status" value="1"/>
</dbReference>
<dbReference type="PANTHER" id="PTHR33867">
    <property type="entry name" value="RIBOSOME MATURATION FACTOR RIMP"/>
    <property type="match status" value="1"/>
</dbReference>
<dbReference type="PANTHER" id="PTHR33867:SF1">
    <property type="entry name" value="RIBOSOME MATURATION FACTOR RIMP"/>
    <property type="match status" value="1"/>
</dbReference>
<dbReference type="Pfam" id="PF17384">
    <property type="entry name" value="DUF150_C"/>
    <property type="match status" value="1"/>
</dbReference>
<dbReference type="Pfam" id="PF02576">
    <property type="entry name" value="RimP_N"/>
    <property type="match status" value="1"/>
</dbReference>
<dbReference type="SUPFAM" id="SSF74942">
    <property type="entry name" value="YhbC-like, C-terminal domain"/>
    <property type="match status" value="1"/>
</dbReference>
<dbReference type="SUPFAM" id="SSF75420">
    <property type="entry name" value="YhbC-like, N-terminal domain"/>
    <property type="match status" value="1"/>
</dbReference>
<protein>
    <recommendedName>
        <fullName evidence="1">Ribosome maturation factor RimP</fullName>
    </recommendedName>
</protein>
<accession>A4VXH7</accession>
<sequence>MFMSSIIELVTAAITPAIQTPYELVDVEYGKMGGDYVLSIFVDKEGGISLQDTADLSEKISPILDTIKPDPFPDQYMLEVTSPGLERPLKTADAVEKAVGKYIHVKLYQAIDKLKVFEGTLLSFDGTDLIMEYMDKTRKKEVTIPYQTVAKARLAVKL</sequence>
<organism>
    <name type="scientific">Streptococcus suis (strain 05ZYH33)</name>
    <dbReference type="NCBI Taxonomy" id="391295"/>
    <lineage>
        <taxon>Bacteria</taxon>
        <taxon>Bacillati</taxon>
        <taxon>Bacillota</taxon>
        <taxon>Bacilli</taxon>
        <taxon>Lactobacillales</taxon>
        <taxon>Streptococcaceae</taxon>
        <taxon>Streptococcus</taxon>
    </lineage>
</organism>
<feature type="chain" id="PRO_0000384785" description="Ribosome maturation factor RimP">
    <location>
        <begin position="1"/>
        <end position="158"/>
    </location>
</feature>
<name>RIMP_STRSY</name>
<reference key="1">
    <citation type="journal article" date="2007" name="PLoS ONE">
        <title>A glimpse of streptococcal toxic shock syndrome from comparative genomics of S. suis 2 Chinese isolates.</title>
        <authorList>
            <person name="Chen C."/>
            <person name="Tang J."/>
            <person name="Dong W."/>
            <person name="Wang C."/>
            <person name="Feng Y."/>
            <person name="Wang J."/>
            <person name="Zheng F."/>
            <person name="Pan X."/>
            <person name="Liu D."/>
            <person name="Li M."/>
            <person name="Song Y."/>
            <person name="Zhu X."/>
            <person name="Sun H."/>
            <person name="Feng T."/>
            <person name="Guo Z."/>
            <person name="Ju A."/>
            <person name="Ge J."/>
            <person name="Dong Y."/>
            <person name="Sun W."/>
            <person name="Jiang Y."/>
            <person name="Wang J."/>
            <person name="Yan J."/>
            <person name="Yang H."/>
            <person name="Wang X."/>
            <person name="Gao G.F."/>
            <person name="Yang R."/>
            <person name="Wang J."/>
            <person name="Yu J."/>
        </authorList>
    </citation>
    <scope>NUCLEOTIDE SEQUENCE [LARGE SCALE GENOMIC DNA]</scope>
    <source>
        <strain>05ZYH33</strain>
    </source>
</reference>
<keyword id="KW-0963">Cytoplasm</keyword>
<keyword id="KW-0690">Ribosome biogenesis</keyword>
<comment type="function">
    <text evidence="1">Required for maturation of 30S ribosomal subunits.</text>
</comment>
<comment type="subcellular location">
    <subcellularLocation>
        <location evidence="1">Cytoplasm</location>
    </subcellularLocation>
</comment>
<comment type="similarity">
    <text evidence="1">Belongs to the RimP family.</text>
</comment>
<evidence type="ECO:0000255" key="1">
    <source>
        <dbReference type="HAMAP-Rule" id="MF_01077"/>
    </source>
</evidence>
<proteinExistence type="inferred from homology"/>
<gene>
    <name evidence="1" type="primary">rimP</name>
    <name type="ordered locus">SSU05_1850</name>
</gene>